<proteinExistence type="inferred from homology"/>
<comment type="function">
    <text evidence="1">Part of a membrane-bound complex that couples electron transfer with translocation of ions across the membrane.</text>
</comment>
<comment type="subunit">
    <text evidence="1">The complex is composed of six subunits: RnfA, RnfB, RnfC, RnfD, RnfE and RnfG.</text>
</comment>
<comment type="subcellular location">
    <subcellularLocation>
        <location evidence="1">Cell inner membrane</location>
        <topology evidence="1">Multi-pass membrane protein</topology>
    </subcellularLocation>
</comment>
<comment type="similarity">
    <text evidence="1">Belongs to the NqrDE/RnfAE family.</text>
</comment>
<gene>
    <name evidence="1" type="primary">rnfA</name>
    <name type="ordered locus">Patl_2965</name>
</gene>
<protein>
    <recommendedName>
        <fullName evidence="1">Ion-translocating oxidoreductase complex subunit A</fullName>
        <ecNumber evidence="1">7.-.-.-</ecNumber>
    </recommendedName>
    <alternativeName>
        <fullName evidence="1">Rnf electron transport complex subunit A</fullName>
    </alternativeName>
</protein>
<dbReference type="EC" id="7.-.-.-" evidence="1"/>
<dbReference type="EMBL" id="CP000388">
    <property type="protein sequence ID" value="ABG41473.1"/>
    <property type="molecule type" value="Genomic_DNA"/>
</dbReference>
<dbReference type="SMR" id="Q15RL5"/>
<dbReference type="STRING" id="342610.Patl_2965"/>
<dbReference type="KEGG" id="pat:Patl_2965"/>
<dbReference type="eggNOG" id="COG4657">
    <property type="taxonomic scope" value="Bacteria"/>
</dbReference>
<dbReference type="HOGENOM" id="CLU_095255_1_0_6"/>
<dbReference type="OrthoDB" id="9803631at2"/>
<dbReference type="Proteomes" id="UP000001981">
    <property type="component" value="Chromosome"/>
</dbReference>
<dbReference type="GO" id="GO:0005886">
    <property type="term" value="C:plasma membrane"/>
    <property type="evidence" value="ECO:0007669"/>
    <property type="project" value="UniProtKB-SubCell"/>
</dbReference>
<dbReference type="GO" id="GO:0022900">
    <property type="term" value="P:electron transport chain"/>
    <property type="evidence" value="ECO:0007669"/>
    <property type="project" value="UniProtKB-UniRule"/>
</dbReference>
<dbReference type="HAMAP" id="MF_00459">
    <property type="entry name" value="RsxA_RnfA"/>
    <property type="match status" value="1"/>
</dbReference>
<dbReference type="InterPro" id="IPR011293">
    <property type="entry name" value="Ion_transpt_RnfA/RsxA"/>
</dbReference>
<dbReference type="InterPro" id="IPR003667">
    <property type="entry name" value="NqrDE/RnfAE"/>
</dbReference>
<dbReference type="InterPro" id="IPR050133">
    <property type="entry name" value="NqrDE/RnfAE_oxidrdctase"/>
</dbReference>
<dbReference type="NCBIfam" id="NF003481">
    <property type="entry name" value="PRK05151.1"/>
    <property type="match status" value="1"/>
</dbReference>
<dbReference type="NCBIfam" id="TIGR01943">
    <property type="entry name" value="rnfA"/>
    <property type="match status" value="1"/>
</dbReference>
<dbReference type="PANTHER" id="PTHR30335">
    <property type="entry name" value="INTEGRAL MEMBRANE PROTEIN OF SOXR-REDUCING COMPLEX"/>
    <property type="match status" value="1"/>
</dbReference>
<dbReference type="PANTHER" id="PTHR30335:SF0">
    <property type="entry name" value="ION-TRANSLOCATING OXIDOREDUCTASE COMPLEX SUBUNIT A"/>
    <property type="match status" value="1"/>
</dbReference>
<dbReference type="Pfam" id="PF02508">
    <property type="entry name" value="Rnf-Nqr"/>
    <property type="match status" value="1"/>
</dbReference>
<dbReference type="PIRSF" id="PIRSF006102">
    <property type="entry name" value="NQR_DE"/>
    <property type="match status" value="1"/>
</dbReference>
<sequence length="193" mass="20868">MTEFLLLLIGTVLVNNFVLVQFLGLCPFMGVSGKLETAIGMSMATTFVLTLASLSSYLVEHYILLPLGIEYLRTLSFILVIAVVVQFTEMVVHKTSPTLYRLLGIFLPLITTNCAVLGVALLNINHDHNFIESVIYGFGAAVGFSLVLILFAAMRERLAVADVPAPFKGASISMITAGLMSLAFLGFTGLVKF</sequence>
<organism>
    <name type="scientific">Pseudoalteromonas atlantica (strain T6c / ATCC BAA-1087)</name>
    <dbReference type="NCBI Taxonomy" id="3042615"/>
    <lineage>
        <taxon>Bacteria</taxon>
        <taxon>Pseudomonadati</taxon>
        <taxon>Pseudomonadota</taxon>
        <taxon>Gammaproteobacteria</taxon>
        <taxon>Alteromonadales</taxon>
        <taxon>Alteromonadaceae</taxon>
        <taxon>Paraglaciecola</taxon>
    </lineage>
</organism>
<feature type="chain" id="PRO_1000013538" description="Ion-translocating oxidoreductase complex subunit A">
    <location>
        <begin position="1"/>
        <end position="193"/>
    </location>
</feature>
<feature type="transmembrane region" description="Helical" evidence="1">
    <location>
        <begin position="4"/>
        <end position="24"/>
    </location>
</feature>
<feature type="transmembrane region" description="Helical" evidence="1">
    <location>
        <begin position="39"/>
        <end position="59"/>
    </location>
</feature>
<feature type="transmembrane region" description="Helical" evidence="1">
    <location>
        <begin position="63"/>
        <end position="83"/>
    </location>
</feature>
<feature type="transmembrane region" description="Helical" evidence="1">
    <location>
        <begin position="102"/>
        <end position="122"/>
    </location>
</feature>
<feature type="transmembrane region" description="Helical" evidence="1">
    <location>
        <begin position="134"/>
        <end position="154"/>
    </location>
</feature>
<feature type="transmembrane region" description="Helical" evidence="1">
    <location>
        <begin position="171"/>
        <end position="191"/>
    </location>
</feature>
<evidence type="ECO:0000255" key="1">
    <source>
        <dbReference type="HAMAP-Rule" id="MF_00459"/>
    </source>
</evidence>
<accession>Q15RL5</accession>
<reference key="1">
    <citation type="submission" date="2006-06" db="EMBL/GenBank/DDBJ databases">
        <title>Complete sequence of Pseudoalteromonas atlantica T6c.</title>
        <authorList>
            <consortium name="US DOE Joint Genome Institute"/>
            <person name="Copeland A."/>
            <person name="Lucas S."/>
            <person name="Lapidus A."/>
            <person name="Barry K."/>
            <person name="Detter J.C."/>
            <person name="Glavina del Rio T."/>
            <person name="Hammon N."/>
            <person name="Israni S."/>
            <person name="Dalin E."/>
            <person name="Tice H."/>
            <person name="Pitluck S."/>
            <person name="Saunders E."/>
            <person name="Brettin T."/>
            <person name="Bruce D."/>
            <person name="Han C."/>
            <person name="Tapia R."/>
            <person name="Gilna P."/>
            <person name="Schmutz J."/>
            <person name="Larimer F."/>
            <person name="Land M."/>
            <person name="Hauser L."/>
            <person name="Kyrpides N."/>
            <person name="Kim E."/>
            <person name="Karls A.C."/>
            <person name="Bartlett D."/>
            <person name="Higgins B.P."/>
            <person name="Richardson P."/>
        </authorList>
    </citation>
    <scope>NUCLEOTIDE SEQUENCE [LARGE SCALE GENOMIC DNA]</scope>
    <source>
        <strain>T6c / ATCC BAA-1087</strain>
    </source>
</reference>
<keyword id="KW-0997">Cell inner membrane</keyword>
<keyword id="KW-1003">Cell membrane</keyword>
<keyword id="KW-0249">Electron transport</keyword>
<keyword id="KW-0472">Membrane</keyword>
<keyword id="KW-1278">Translocase</keyword>
<keyword id="KW-0812">Transmembrane</keyword>
<keyword id="KW-1133">Transmembrane helix</keyword>
<keyword id="KW-0813">Transport</keyword>
<name>RNFA_PSEA6</name>